<proteinExistence type="inferred from homology"/>
<keyword id="KW-0145">Chemotaxis</keyword>
<keyword id="KW-0963">Cytoplasm</keyword>
<keyword id="KW-0378">Hydrolase</keyword>
<keyword id="KW-0597">Phosphoprotein</keyword>
<comment type="function">
    <text evidence="1">Involved in chemotaxis. Part of a chemotaxis signal transduction system that modulates chemotaxis in response to various stimuli. Catalyzes the demethylation of specific methylglutamate residues introduced into the chemoreceptors (methyl-accepting chemotaxis proteins or MCP) by CheR. Also mediates the irreversible deamidation of specific glutamine residues to glutamic acid.</text>
</comment>
<comment type="catalytic activity">
    <reaction evidence="1">
        <text>[protein]-L-glutamate 5-O-methyl ester + H2O = L-glutamyl-[protein] + methanol + H(+)</text>
        <dbReference type="Rhea" id="RHEA:23236"/>
        <dbReference type="Rhea" id="RHEA-COMP:10208"/>
        <dbReference type="Rhea" id="RHEA-COMP:10311"/>
        <dbReference type="ChEBI" id="CHEBI:15377"/>
        <dbReference type="ChEBI" id="CHEBI:15378"/>
        <dbReference type="ChEBI" id="CHEBI:17790"/>
        <dbReference type="ChEBI" id="CHEBI:29973"/>
        <dbReference type="ChEBI" id="CHEBI:82795"/>
        <dbReference type="EC" id="3.1.1.61"/>
    </reaction>
</comment>
<comment type="catalytic activity">
    <reaction evidence="1">
        <text>L-glutaminyl-[protein] + H2O = L-glutamyl-[protein] + NH4(+)</text>
        <dbReference type="Rhea" id="RHEA:16441"/>
        <dbReference type="Rhea" id="RHEA-COMP:10207"/>
        <dbReference type="Rhea" id="RHEA-COMP:10208"/>
        <dbReference type="ChEBI" id="CHEBI:15377"/>
        <dbReference type="ChEBI" id="CHEBI:28938"/>
        <dbReference type="ChEBI" id="CHEBI:29973"/>
        <dbReference type="ChEBI" id="CHEBI:30011"/>
        <dbReference type="EC" id="3.5.1.44"/>
    </reaction>
</comment>
<comment type="subcellular location">
    <subcellularLocation>
        <location evidence="1">Cytoplasm</location>
    </subcellularLocation>
</comment>
<comment type="domain">
    <text evidence="1">Contains a C-terminal catalytic domain, and an N-terminal region which modulates catalytic activity.</text>
</comment>
<comment type="PTM">
    <text evidence="1">Phosphorylated by CheA. Phosphorylation of the N-terminal regulatory domain activates the methylesterase activity.</text>
</comment>
<comment type="similarity">
    <text evidence="1">Belongs to the CheB family.</text>
</comment>
<dbReference type="EC" id="3.1.1.61" evidence="1"/>
<dbReference type="EC" id="3.5.1.44" evidence="1"/>
<dbReference type="EMBL" id="CP000301">
    <property type="protein sequence ID" value="ABD90133.1"/>
    <property type="molecule type" value="Genomic_DNA"/>
</dbReference>
<dbReference type="SMR" id="Q20XK3"/>
<dbReference type="STRING" id="316056.RPC_4611"/>
<dbReference type="KEGG" id="rpc:RPC_4611"/>
<dbReference type="eggNOG" id="COG2201">
    <property type="taxonomic scope" value="Bacteria"/>
</dbReference>
<dbReference type="HOGENOM" id="CLU_000445_51_0_5"/>
<dbReference type="OrthoDB" id="9793421at2"/>
<dbReference type="GO" id="GO:0005737">
    <property type="term" value="C:cytoplasm"/>
    <property type="evidence" value="ECO:0007669"/>
    <property type="project" value="UniProtKB-SubCell"/>
</dbReference>
<dbReference type="GO" id="GO:0000156">
    <property type="term" value="F:phosphorelay response regulator activity"/>
    <property type="evidence" value="ECO:0007669"/>
    <property type="project" value="InterPro"/>
</dbReference>
<dbReference type="GO" id="GO:0008984">
    <property type="term" value="F:protein-glutamate methylesterase activity"/>
    <property type="evidence" value="ECO:0007669"/>
    <property type="project" value="UniProtKB-UniRule"/>
</dbReference>
<dbReference type="GO" id="GO:0050568">
    <property type="term" value="F:protein-glutamine glutaminase activity"/>
    <property type="evidence" value="ECO:0007669"/>
    <property type="project" value="UniProtKB-UniRule"/>
</dbReference>
<dbReference type="GO" id="GO:0006935">
    <property type="term" value="P:chemotaxis"/>
    <property type="evidence" value="ECO:0007669"/>
    <property type="project" value="UniProtKB-UniRule"/>
</dbReference>
<dbReference type="CDD" id="cd16432">
    <property type="entry name" value="CheB_Rec"/>
    <property type="match status" value="1"/>
</dbReference>
<dbReference type="CDD" id="cd17541">
    <property type="entry name" value="REC_CheB-like"/>
    <property type="match status" value="1"/>
</dbReference>
<dbReference type="Gene3D" id="3.40.50.2300">
    <property type="match status" value="1"/>
</dbReference>
<dbReference type="Gene3D" id="3.40.50.180">
    <property type="entry name" value="Methylesterase CheB, C-terminal domain"/>
    <property type="match status" value="1"/>
</dbReference>
<dbReference type="HAMAP" id="MF_00099">
    <property type="entry name" value="CheB_chemtxs"/>
    <property type="match status" value="1"/>
</dbReference>
<dbReference type="InterPro" id="IPR008248">
    <property type="entry name" value="CheB-like"/>
</dbReference>
<dbReference type="InterPro" id="IPR035909">
    <property type="entry name" value="CheB_C"/>
</dbReference>
<dbReference type="InterPro" id="IPR011006">
    <property type="entry name" value="CheY-like_superfamily"/>
</dbReference>
<dbReference type="InterPro" id="IPR000673">
    <property type="entry name" value="Sig_transdc_resp-reg_Me-estase"/>
</dbReference>
<dbReference type="InterPro" id="IPR001789">
    <property type="entry name" value="Sig_transdc_resp-reg_receiver"/>
</dbReference>
<dbReference type="NCBIfam" id="NF001965">
    <property type="entry name" value="PRK00742.1"/>
    <property type="match status" value="1"/>
</dbReference>
<dbReference type="PANTHER" id="PTHR42872">
    <property type="entry name" value="PROTEIN-GLUTAMATE METHYLESTERASE/PROTEIN-GLUTAMINE GLUTAMINASE"/>
    <property type="match status" value="1"/>
</dbReference>
<dbReference type="PANTHER" id="PTHR42872:SF6">
    <property type="entry name" value="PROTEIN-GLUTAMATE METHYLESTERASE_PROTEIN-GLUTAMINE GLUTAMINASE"/>
    <property type="match status" value="1"/>
</dbReference>
<dbReference type="Pfam" id="PF01339">
    <property type="entry name" value="CheB_methylest"/>
    <property type="match status" value="1"/>
</dbReference>
<dbReference type="Pfam" id="PF00072">
    <property type="entry name" value="Response_reg"/>
    <property type="match status" value="1"/>
</dbReference>
<dbReference type="PIRSF" id="PIRSF000876">
    <property type="entry name" value="RR_chemtxs_CheB"/>
    <property type="match status" value="1"/>
</dbReference>
<dbReference type="SMART" id="SM00448">
    <property type="entry name" value="REC"/>
    <property type="match status" value="1"/>
</dbReference>
<dbReference type="SUPFAM" id="SSF52172">
    <property type="entry name" value="CheY-like"/>
    <property type="match status" value="1"/>
</dbReference>
<dbReference type="SUPFAM" id="SSF52738">
    <property type="entry name" value="Methylesterase CheB, C-terminal domain"/>
    <property type="match status" value="1"/>
</dbReference>
<dbReference type="PROSITE" id="PS50122">
    <property type="entry name" value="CHEB"/>
    <property type="match status" value="1"/>
</dbReference>
<dbReference type="PROSITE" id="PS50110">
    <property type="entry name" value="RESPONSE_REGULATORY"/>
    <property type="match status" value="1"/>
</dbReference>
<gene>
    <name evidence="1" type="primary">cheB2</name>
    <name type="ordered locus">RPC_4611</name>
</gene>
<accession>Q20XK3</accession>
<reference key="1">
    <citation type="submission" date="2006-03" db="EMBL/GenBank/DDBJ databases">
        <title>Complete sequence of Rhodopseudomonas palustris BisB18.</title>
        <authorList>
            <consortium name="US DOE Joint Genome Institute"/>
            <person name="Copeland A."/>
            <person name="Lucas S."/>
            <person name="Lapidus A."/>
            <person name="Barry K."/>
            <person name="Detter J.C."/>
            <person name="Glavina del Rio T."/>
            <person name="Hammon N."/>
            <person name="Israni S."/>
            <person name="Dalin E."/>
            <person name="Tice H."/>
            <person name="Pitluck S."/>
            <person name="Chain P."/>
            <person name="Malfatti S."/>
            <person name="Shin M."/>
            <person name="Vergez L."/>
            <person name="Schmutz J."/>
            <person name="Larimer F."/>
            <person name="Land M."/>
            <person name="Hauser L."/>
            <person name="Pelletier D.A."/>
            <person name="Kyrpides N."/>
            <person name="Anderson I."/>
            <person name="Oda Y."/>
            <person name="Harwood C.S."/>
            <person name="Richardson P."/>
        </authorList>
    </citation>
    <scope>NUCLEOTIDE SEQUENCE [LARGE SCALE GENOMIC DNA]</scope>
    <source>
        <strain>BisB18</strain>
    </source>
</reference>
<evidence type="ECO:0000255" key="1">
    <source>
        <dbReference type="HAMAP-Rule" id="MF_00099"/>
    </source>
</evidence>
<evidence type="ECO:0000256" key="2">
    <source>
        <dbReference type="SAM" id="MobiDB-lite"/>
    </source>
</evidence>
<feature type="chain" id="PRO_0000264307" description="Protein-glutamate methylesterase/protein-glutamine glutaminase 2">
    <location>
        <begin position="1"/>
        <end position="366"/>
    </location>
</feature>
<feature type="domain" description="Response regulatory" evidence="1">
    <location>
        <begin position="3"/>
        <end position="119"/>
    </location>
</feature>
<feature type="domain" description="CheB-type methylesterase" evidence="1">
    <location>
        <begin position="171"/>
        <end position="363"/>
    </location>
</feature>
<feature type="region of interest" description="Disordered" evidence="2">
    <location>
        <begin position="149"/>
        <end position="168"/>
    </location>
</feature>
<feature type="compositionally biased region" description="Basic residues" evidence="2">
    <location>
        <begin position="156"/>
        <end position="166"/>
    </location>
</feature>
<feature type="active site" evidence="1">
    <location>
        <position position="181"/>
    </location>
</feature>
<feature type="active site" evidence="1">
    <location>
        <position position="208"/>
    </location>
</feature>
<feature type="active site" evidence="1">
    <location>
        <position position="305"/>
    </location>
</feature>
<feature type="modified residue" description="4-aspartylphosphate" evidence="1">
    <location>
        <position position="53"/>
    </location>
</feature>
<name>CHEB2_RHOPB</name>
<protein>
    <recommendedName>
        <fullName evidence="1">Protein-glutamate methylesterase/protein-glutamine glutaminase 2</fullName>
        <ecNumber evidence="1">3.1.1.61</ecNumber>
        <ecNumber evidence="1">3.5.1.44</ecNumber>
    </recommendedName>
</protein>
<sequence length="366" mass="39092">MIRLLIADDSALVRKLLEGVFLEEGDFEIRTARTGLEALDMVRAFDPHVVTLDVQMPGMDGLTCLGRIMLEAPRPVVMISSLTEQNADATLSAMALGAVDVIAKPGGTFSLELDRLRPLLVATIRSAAQAKIRPTHRLADRIRHQFRDAASSPRAKAARRGAARQRAKAEPAPGLVLIGTSTGGPAALNILLPQLPADFPWPVLIAQHLPATFTGAFAKRLDRECALNVVEVDVPRQLEPGTVYIGRGDADVIVAPRPSGLIALSVPARRDYPWHPSVERMVDSALEHYDGKRLLGVLMTGMGDDGATAMTRLQALGGRTIAEAESTAVVWGMPGELVRQGGATLVLPVEEIAAAVIEWGNADAAD</sequence>
<organism>
    <name type="scientific">Rhodopseudomonas palustris (strain BisB18)</name>
    <dbReference type="NCBI Taxonomy" id="316056"/>
    <lineage>
        <taxon>Bacteria</taxon>
        <taxon>Pseudomonadati</taxon>
        <taxon>Pseudomonadota</taxon>
        <taxon>Alphaproteobacteria</taxon>
        <taxon>Hyphomicrobiales</taxon>
        <taxon>Nitrobacteraceae</taxon>
        <taxon>Rhodopseudomonas</taxon>
    </lineage>
</organism>